<accession>B5YSA4</accession>
<reference key="1">
    <citation type="journal article" date="2011" name="Proc. Natl. Acad. Sci. U.S.A.">
        <title>Genomic anatomy of Escherichia coli O157:H7 outbreaks.</title>
        <authorList>
            <person name="Eppinger M."/>
            <person name="Mammel M.K."/>
            <person name="Leclerc J.E."/>
            <person name="Ravel J."/>
            <person name="Cebula T.A."/>
        </authorList>
    </citation>
    <scope>NUCLEOTIDE SEQUENCE [LARGE SCALE GENOMIC DNA]</scope>
    <source>
        <strain>EC4115 / EHEC</strain>
    </source>
</reference>
<proteinExistence type="inferred from homology"/>
<organism>
    <name type="scientific">Escherichia coli O157:H7 (strain EC4115 / EHEC)</name>
    <dbReference type="NCBI Taxonomy" id="444450"/>
    <lineage>
        <taxon>Bacteria</taxon>
        <taxon>Pseudomonadati</taxon>
        <taxon>Pseudomonadota</taxon>
        <taxon>Gammaproteobacteria</taxon>
        <taxon>Enterobacterales</taxon>
        <taxon>Enterobacteriaceae</taxon>
        <taxon>Escherichia</taxon>
    </lineage>
</organism>
<name>DPS_ECO5E</name>
<feature type="chain" id="PRO_1000145899" description="DNA protection during starvation protein">
    <location>
        <begin position="1"/>
        <end position="167"/>
    </location>
</feature>
<feature type="binding site" evidence="1">
    <location>
        <position position="51"/>
    </location>
    <ligand>
        <name>Fe cation</name>
        <dbReference type="ChEBI" id="CHEBI:24875"/>
        <label>1</label>
        <note>ligand shared between two neighboring subunits</note>
    </ligand>
</feature>
<feature type="binding site" description="in other chain" evidence="1">
    <location>
        <position position="78"/>
    </location>
    <ligand>
        <name>Fe cation</name>
        <dbReference type="ChEBI" id="CHEBI:24875"/>
        <label>1</label>
        <note>ligand shared between two neighboring subunits</note>
    </ligand>
</feature>
<feature type="binding site" description="in other chain" evidence="1">
    <location>
        <position position="82"/>
    </location>
    <ligand>
        <name>Fe cation</name>
        <dbReference type="ChEBI" id="CHEBI:24875"/>
        <label>1</label>
        <note>ligand shared between two neighboring subunits</note>
    </ligand>
</feature>
<feature type="binding site" evidence="1">
    <location>
        <position position="82"/>
    </location>
    <ligand>
        <name>Fe cation</name>
        <dbReference type="ChEBI" id="CHEBI:24875"/>
        <label>2</label>
    </ligand>
</feature>
<evidence type="ECO:0000255" key="1">
    <source>
        <dbReference type="HAMAP-Rule" id="MF_01441"/>
    </source>
</evidence>
<dbReference type="EC" id="1.16.-.-" evidence="1"/>
<dbReference type="EMBL" id="CP001164">
    <property type="protein sequence ID" value="ACI36579.1"/>
    <property type="molecule type" value="Genomic_DNA"/>
</dbReference>
<dbReference type="RefSeq" id="WP_000100800.1">
    <property type="nucleotide sequence ID" value="NC_011353.1"/>
</dbReference>
<dbReference type="SMR" id="B5YSA4"/>
<dbReference type="GeneID" id="93776616"/>
<dbReference type="KEGG" id="ecf:ECH74115_0961"/>
<dbReference type="HOGENOM" id="CLU_098183_1_2_6"/>
<dbReference type="GO" id="GO:0005737">
    <property type="term" value="C:cytoplasm"/>
    <property type="evidence" value="ECO:0007669"/>
    <property type="project" value="UniProtKB-UniRule"/>
</dbReference>
<dbReference type="GO" id="GO:0009295">
    <property type="term" value="C:nucleoid"/>
    <property type="evidence" value="ECO:0007669"/>
    <property type="project" value="UniProtKB-SubCell"/>
</dbReference>
<dbReference type="GO" id="GO:0003677">
    <property type="term" value="F:DNA binding"/>
    <property type="evidence" value="ECO:0007669"/>
    <property type="project" value="UniProtKB-UniRule"/>
</dbReference>
<dbReference type="GO" id="GO:0008199">
    <property type="term" value="F:ferric iron binding"/>
    <property type="evidence" value="ECO:0007669"/>
    <property type="project" value="UniProtKB-UniRule"/>
</dbReference>
<dbReference type="GO" id="GO:0016722">
    <property type="term" value="F:oxidoreductase activity, acting on metal ions"/>
    <property type="evidence" value="ECO:0007669"/>
    <property type="project" value="InterPro"/>
</dbReference>
<dbReference type="GO" id="GO:0030261">
    <property type="term" value="P:chromosome condensation"/>
    <property type="evidence" value="ECO:0007669"/>
    <property type="project" value="UniProtKB-KW"/>
</dbReference>
<dbReference type="GO" id="GO:0006879">
    <property type="term" value="P:intracellular iron ion homeostasis"/>
    <property type="evidence" value="ECO:0007669"/>
    <property type="project" value="UniProtKB-KW"/>
</dbReference>
<dbReference type="CDD" id="cd01043">
    <property type="entry name" value="DPS"/>
    <property type="match status" value="1"/>
</dbReference>
<dbReference type="FunFam" id="1.20.1260.10:FF:000003">
    <property type="entry name" value="DNA protection during starvation protein"/>
    <property type="match status" value="1"/>
</dbReference>
<dbReference type="Gene3D" id="1.20.1260.10">
    <property type="match status" value="1"/>
</dbReference>
<dbReference type="HAMAP" id="MF_01441">
    <property type="entry name" value="Dps"/>
    <property type="match status" value="1"/>
</dbReference>
<dbReference type="InterPro" id="IPR002177">
    <property type="entry name" value="DPS_DNA-bd"/>
</dbReference>
<dbReference type="InterPro" id="IPR023188">
    <property type="entry name" value="DPS_DNA-bd_CS"/>
</dbReference>
<dbReference type="InterPro" id="IPR023067">
    <property type="entry name" value="Dps_gammaproteobac"/>
</dbReference>
<dbReference type="InterPro" id="IPR012347">
    <property type="entry name" value="Ferritin-like"/>
</dbReference>
<dbReference type="InterPro" id="IPR009078">
    <property type="entry name" value="Ferritin-like_SF"/>
</dbReference>
<dbReference type="InterPro" id="IPR008331">
    <property type="entry name" value="Ferritin_DPS_dom"/>
</dbReference>
<dbReference type="NCBIfam" id="NF006975">
    <property type="entry name" value="PRK09448.1"/>
    <property type="match status" value="1"/>
</dbReference>
<dbReference type="PANTHER" id="PTHR42932:SF3">
    <property type="entry name" value="DNA PROTECTION DURING STARVATION PROTEIN"/>
    <property type="match status" value="1"/>
</dbReference>
<dbReference type="PANTHER" id="PTHR42932">
    <property type="entry name" value="GENERAL STRESS PROTEIN 20U"/>
    <property type="match status" value="1"/>
</dbReference>
<dbReference type="Pfam" id="PF00210">
    <property type="entry name" value="Ferritin"/>
    <property type="match status" value="1"/>
</dbReference>
<dbReference type="PIRSF" id="PIRSF005900">
    <property type="entry name" value="Dps"/>
    <property type="match status" value="1"/>
</dbReference>
<dbReference type="PRINTS" id="PR01346">
    <property type="entry name" value="HELNAPAPROT"/>
</dbReference>
<dbReference type="SUPFAM" id="SSF47240">
    <property type="entry name" value="Ferritin-like"/>
    <property type="match status" value="1"/>
</dbReference>
<dbReference type="PROSITE" id="PS00818">
    <property type="entry name" value="DPS_1"/>
    <property type="match status" value="1"/>
</dbReference>
<dbReference type="PROSITE" id="PS00819">
    <property type="entry name" value="DPS_2"/>
    <property type="match status" value="1"/>
</dbReference>
<sequence length="167" mass="18695">MSTAKLVKSKATNLLYTRNDVSDSEKKATVELLNRQVIQFIDLSLITKQAHWNMRGANFIAVHEMLDGFRTALIDHLDTMAERAVQLGGVALGTTQVINSKTPLKSYPLDIHNVQDHLKELADRYAIVANDVRKAIGEAKDDDTADILTAASRDLDKFLWFIESNIE</sequence>
<gene>
    <name evidence="1" type="primary">dps</name>
    <name type="ordered locus">ECH74115_0961</name>
</gene>
<keyword id="KW-0963">Cytoplasm</keyword>
<keyword id="KW-0226">DNA condensation</keyword>
<keyword id="KW-0238">DNA-binding</keyword>
<keyword id="KW-0408">Iron</keyword>
<keyword id="KW-0409">Iron storage</keyword>
<keyword id="KW-0479">Metal-binding</keyword>
<keyword id="KW-0560">Oxidoreductase</keyword>
<comment type="function">
    <text evidence="1">During stationary phase, binds the chromosome non-specifically, forming a highly ordered and stable dps-DNA co-crystal within which chromosomal DNA is condensed and protected from diverse damages. It protects DNA from oxidative damage by sequestering intracellular Fe(2+) ion and storing it in the form of Fe(3+) oxyhydroxide mineral, which can be released after reduction. One hydrogen peroxide oxidizes two Fe(2+) ions, which prevents hydroxyl radical production by the Fenton reaction. Dps also protects the cell from UV and gamma irradiation, iron and copper toxicity, thermal stress and acid and base shocks. Also shows a weak catalase activity.</text>
</comment>
<comment type="catalytic activity">
    <reaction evidence="1">
        <text>2 Fe(2+) + H2O2 + 2 H(+) = 2 Fe(3+) + 2 H2O</text>
        <dbReference type="Rhea" id="RHEA:48712"/>
        <dbReference type="ChEBI" id="CHEBI:15377"/>
        <dbReference type="ChEBI" id="CHEBI:15378"/>
        <dbReference type="ChEBI" id="CHEBI:16240"/>
        <dbReference type="ChEBI" id="CHEBI:29033"/>
        <dbReference type="ChEBI" id="CHEBI:29034"/>
    </reaction>
</comment>
<comment type="subunit">
    <text evidence="1">Homododecamer. The 12 subunits form a hollow sphere into which the mineral iron core of up to 500 Fe(3+) can be deposited.</text>
</comment>
<comment type="subcellular location">
    <subcellularLocation>
        <location evidence="1">Cytoplasm</location>
        <location evidence="1">Nucleoid</location>
    </subcellularLocation>
</comment>
<comment type="similarity">
    <text evidence="1">Belongs to the Dps family.</text>
</comment>
<protein>
    <recommendedName>
        <fullName evidence="1">DNA protection during starvation protein</fullName>
        <ecNumber evidence="1">1.16.-.-</ecNumber>
    </recommendedName>
</protein>